<gene>
    <name evidence="1" type="primary">purC</name>
    <name type="ordered locus">SCH_2482</name>
</gene>
<dbReference type="EC" id="6.3.2.6" evidence="1"/>
<dbReference type="EMBL" id="AE017220">
    <property type="protein sequence ID" value="AAX66388.1"/>
    <property type="molecule type" value="Genomic_DNA"/>
</dbReference>
<dbReference type="RefSeq" id="WP_001171630.1">
    <property type="nucleotide sequence ID" value="NC_006905.1"/>
</dbReference>
<dbReference type="SMR" id="Q57LM4"/>
<dbReference type="KEGG" id="sec:SCH_2482"/>
<dbReference type="HOGENOM" id="CLU_061495_2_1_6"/>
<dbReference type="UniPathway" id="UPA00074">
    <property type="reaction ID" value="UER00131"/>
</dbReference>
<dbReference type="Proteomes" id="UP000000538">
    <property type="component" value="Chromosome"/>
</dbReference>
<dbReference type="GO" id="GO:0005829">
    <property type="term" value="C:cytosol"/>
    <property type="evidence" value="ECO:0007669"/>
    <property type="project" value="TreeGrafter"/>
</dbReference>
<dbReference type="GO" id="GO:0005524">
    <property type="term" value="F:ATP binding"/>
    <property type="evidence" value="ECO:0007669"/>
    <property type="project" value="UniProtKB-KW"/>
</dbReference>
<dbReference type="GO" id="GO:0004639">
    <property type="term" value="F:phosphoribosylaminoimidazolesuccinocarboxamide synthase activity"/>
    <property type="evidence" value="ECO:0007669"/>
    <property type="project" value="UniProtKB-UniRule"/>
</dbReference>
<dbReference type="GO" id="GO:0006189">
    <property type="term" value="P:'de novo' IMP biosynthetic process"/>
    <property type="evidence" value="ECO:0007669"/>
    <property type="project" value="UniProtKB-UniRule"/>
</dbReference>
<dbReference type="GO" id="GO:0009236">
    <property type="term" value="P:cobalamin biosynthetic process"/>
    <property type="evidence" value="ECO:0007669"/>
    <property type="project" value="InterPro"/>
</dbReference>
<dbReference type="CDD" id="cd01415">
    <property type="entry name" value="SAICAR_synt_PurC"/>
    <property type="match status" value="1"/>
</dbReference>
<dbReference type="FunFam" id="3.30.200.20:FF:000086">
    <property type="entry name" value="Phosphoribosylaminoimidazole-succinocarboxamide synthase"/>
    <property type="match status" value="1"/>
</dbReference>
<dbReference type="FunFam" id="3.30.470.20:FF:000006">
    <property type="entry name" value="Phosphoribosylaminoimidazole-succinocarboxamide synthase"/>
    <property type="match status" value="1"/>
</dbReference>
<dbReference type="Gene3D" id="3.30.470.20">
    <property type="entry name" value="ATP-grasp fold, B domain"/>
    <property type="match status" value="1"/>
</dbReference>
<dbReference type="Gene3D" id="3.30.200.20">
    <property type="entry name" value="Phosphorylase Kinase, domain 1"/>
    <property type="match status" value="1"/>
</dbReference>
<dbReference type="HAMAP" id="MF_00137">
    <property type="entry name" value="SAICAR_synth"/>
    <property type="match status" value="1"/>
</dbReference>
<dbReference type="InterPro" id="IPR028923">
    <property type="entry name" value="SAICAR_synt/ADE2_N"/>
</dbReference>
<dbReference type="InterPro" id="IPR033934">
    <property type="entry name" value="SAICAR_synt_PurC"/>
</dbReference>
<dbReference type="InterPro" id="IPR001636">
    <property type="entry name" value="SAICAR_synth"/>
</dbReference>
<dbReference type="InterPro" id="IPR050089">
    <property type="entry name" value="SAICAR_synthetase"/>
</dbReference>
<dbReference type="InterPro" id="IPR018236">
    <property type="entry name" value="SAICAR_synthetase_CS"/>
</dbReference>
<dbReference type="NCBIfam" id="TIGR00081">
    <property type="entry name" value="purC"/>
    <property type="match status" value="1"/>
</dbReference>
<dbReference type="PANTHER" id="PTHR43599">
    <property type="entry name" value="MULTIFUNCTIONAL PROTEIN ADE2"/>
    <property type="match status" value="1"/>
</dbReference>
<dbReference type="PANTHER" id="PTHR43599:SF3">
    <property type="entry name" value="SI:DKEY-6E2.2"/>
    <property type="match status" value="1"/>
</dbReference>
<dbReference type="Pfam" id="PF01259">
    <property type="entry name" value="SAICAR_synt"/>
    <property type="match status" value="1"/>
</dbReference>
<dbReference type="SUPFAM" id="SSF56104">
    <property type="entry name" value="SAICAR synthase-like"/>
    <property type="match status" value="1"/>
</dbReference>
<dbReference type="PROSITE" id="PS01057">
    <property type="entry name" value="SAICAR_SYNTHETASE_1"/>
    <property type="match status" value="1"/>
</dbReference>
<dbReference type="PROSITE" id="PS01058">
    <property type="entry name" value="SAICAR_SYNTHETASE_2"/>
    <property type="match status" value="1"/>
</dbReference>
<name>PUR7_SALCH</name>
<feature type="chain" id="PRO_1000018775" description="Phosphoribosylaminoimidazole-succinocarboxamide synthase">
    <location>
        <begin position="1"/>
        <end position="237"/>
    </location>
</feature>
<proteinExistence type="inferred from homology"/>
<organism>
    <name type="scientific">Salmonella choleraesuis (strain SC-B67)</name>
    <dbReference type="NCBI Taxonomy" id="321314"/>
    <lineage>
        <taxon>Bacteria</taxon>
        <taxon>Pseudomonadati</taxon>
        <taxon>Pseudomonadota</taxon>
        <taxon>Gammaproteobacteria</taxon>
        <taxon>Enterobacterales</taxon>
        <taxon>Enterobacteriaceae</taxon>
        <taxon>Salmonella</taxon>
    </lineage>
</organism>
<protein>
    <recommendedName>
        <fullName evidence="1">Phosphoribosylaminoimidazole-succinocarboxamide synthase</fullName>
        <ecNumber evidence="1">6.3.2.6</ecNumber>
    </recommendedName>
    <alternativeName>
        <fullName evidence="1">SAICAR synthetase</fullName>
    </alternativeName>
</protein>
<reference key="1">
    <citation type="journal article" date="2005" name="Nucleic Acids Res.">
        <title>The genome sequence of Salmonella enterica serovar Choleraesuis, a highly invasive and resistant zoonotic pathogen.</title>
        <authorList>
            <person name="Chiu C.-H."/>
            <person name="Tang P."/>
            <person name="Chu C."/>
            <person name="Hu S."/>
            <person name="Bao Q."/>
            <person name="Yu J."/>
            <person name="Chou Y.-Y."/>
            <person name="Wang H.-S."/>
            <person name="Lee Y.-S."/>
        </authorList>
    </citation>
    <scope>NUCLEOTIDE SEQUENCE [LARGE SCALE GENOMIC DNA]</scope>
    <source>
        <strain>SC-B67</strain>
    </source>
</reference>
<sequence length="237" mass="26908">MQKQAELYRGKAKTVYSTENPDLLVLEFRNDTSAGDGARIEQFDRKGMVNNKFNHFIMTKLAEAGIPTQMERLLSDTECLVKKLEMVPVECVVRNRAAGSLVKRLGVEEGMELNPPIFDLFLKNDALHDPMVNSSYCETFGWVSQENLARMKELTYKANDVLKKLFDDAGLILVDFKLEFGLYKGEVVLGDEFSPDGSRLWDKETLDKMDKDRFRQSLGGLIEAYEAVAHRLGVKLD</sequence>
<evidence type="ECO:0000255" key="1">
    <source>
        <dbReference type="HAMAP-Rule" id="MF_00137"/>
    </source>
</evidence>
<accession>Q57LM4</accession>
<comment type="catalytic activity">
    <reaction evidence="1">
        <text>5-amino-1-(5-phospho-D-ribosyl)imidazole-4-carboxylate + L-aspartate + ATP = (2S)-2-[5-amino-1-(5-phospho-beta-D-ribosyl)imidazole-4-carboxamido]succinate + ADP + phosphate + 2 H(+)</text>
        <dbReference type="Rhea" id="RHEA:22628"/>
        <dbReference type="ChEBI" id="CHEBI:15378"/>
        <dbReference type="ChEBI" id="CHEBI:29991"/>
        <dbReference type="ChEBI" id="CHEBI:30616"/>
        <dbReference type="ChEBI" id="CHEBI:43474"/>
        <dbReference type="ChEBI" id="CHEBI:58443"/>
        <dbReference type="ChEBI" id="CHEBI:77657"/>
        <dbReference type="ChEBI" id="CHEBI:456216"/>
        <dbReference type="EC" id="6.3.2.6"/>
    </reaction>
</comment>
<comment type="pathway">
    <text evidence="1">Purine metabolism; IMP biosynthesis via de novo pathway; 5-amino-1-(5-phospho-D-ribosyl)imidazole-4-carboxamide from 5-amino-1-(5-phospho-D-ribosyl)imidazole-4-carboxylate: step 1/2.</text>
</comment>
<comment type="similarity">
    <text evidence="1">Belongs to the SAICAR synthetase family.</text>
</comment>
<keyword id="KW-0067">ATP-binding</keyword>
<keyword id="KW-0436">Ligase</keyword>
<keyword id="KW-0547">Nucleotide-binding</keyword>
<keyword id="KW-0658">Purine biosynthesis</keyword>